<organism>
    <name type="scientific">Helicobacter pylori (strain ATCC 700392 / 26695)</name>
    <name type="common">Campylobacter pylori</name>
    <dbReference type="NCBI Taxonomy" id="85962"/>
    <lineage>
        <taxon>Bacteria</taxon>
        <taxon>Pseudomonadati</taxon>
        <taxon>Campylobacterota</taxon>
        <taxon>Epsilonproteobacteria</taxon>
        <taxon>Campylobacterales</taxon>
        <taxon>Helicobacteraceae</taxon>
        <taxon>Helicobacter</taxon>
    </lineage>
</organism>
<accession>O25474</accession>
<name>LOLA_HELPY</name>
<comment type="function">
    <text evidence="1">Participates in the translocation of lipoproteins from the inner membrane to the outer membrane. Only forms a complex with a lipoprotein if the residue after the N-terminal Cys is not an aspartate (The Asp acts as a targeting signal to indicate that the lipoprotein should stay in the inner membrane) (By similarity).</text>
</comment>
<comment type="subunit">
    <text evidence="1">Monomer.</text>
</comment>
<comment type="subcellular location">
    <subcellularLocation>
        <location evidence="1">Periplasm</location>
    </subcellularLocation>
</comment>
<comment type="similarity">
    <text evidence="3">Belongs to the LolA family.</text>
</comment>
<gene>
    <name type="primary">lolA</name>
    <name type="ordered locus">HP_0785</name>
</gene>
<proteinExistence type="inferred from homology"/>
<sequence>MRAFLKILMVLIFMSVAYAKNPSTLSKEEEVLQHLQSFSAHFKQVLKNEKPLVYYGVLKAKAPNWALWVYEKPLKKEIYMNDKEVVIYEPNLFQATITPLKDKTDFFTILKRLKKQDDGSFKTTINKTTYRLVFKDGKPFSLEFKDGMNNLVTITFSQAEINPTIANEIFVFKPKDENIDIVRQ</sequence>
<protein>
    <recommendedName>
        <fullName>Outer-membrane lipoprotein carrier protein</fullName>
    </recommendedName>
</protein>
<dbReference type="EMBL" id="AE000511">
    <property type="protein sequence ID" value="AAD07829.1"/>
    <property type="molecule type" value="Genomic_DNA"/>
</dbReference>
<dbReference type="PIR" id="A64618">
    <property type="entry name" value="A64618"/>
</dbReference>
<dbReference type="RefSeq" id="NP_207578.1">
    <property type="nucleotide sequence ID" value="NC_000915.1"/>
</dbReference>
<dbReference type="RefSeq" id="WP_001201065.1">
    <property type="nucleotide sequence ID" value="NC_018939.1"/>
</dbReference>
<dbReference type="SMR" id="O25474"/>
<dbReference type="DIP" id="DIP-3763N"/>
<dbReference type="IntAct" id="O25474">
    <property type="interactions" value="1"/>
</dbReference>
<dbReference type="MINT" id="O25474"/>
<dbReference type="STRING" id="85962.HP_0785"/>
<dbReference type="PaxDb" id="85962-C694_04025"/>
<dbReference type="EnsemblBacteria" id="AAD07829">
    <property type="protein sequence ID" value="AAD07829"/>
    <property type="gene ID" value="HP_0785"/>
</dbReference>
<dbReference type="KEGG" id="heo:C694_04025"/>
<dbReference type="KEGG" id="hpy:HP_0785"/>
<dbReference type="PATRIC" id="fig|85962.47.peg.837"/>
<dbReference type="eggNOG" id="COG2834">
    <property type="taxonomic scope" value="Bacteria"/>
</dbReference>
<dbReference type="InParanoid" id="O25474"/>
<dbReference type="OrthoDB" id="5339202at2"/>
<dbReference type="Proteomes" id="UP000000429">
    <property type="component" value="Chromosome"/>
</dbReference>
<dbReference type="GO" id="GO:0042597">
    <property type="term" value="C:periplasmic space"/>
    <property type="evidence" value="ECO:0007669"/>
    <property type="project" value="UniProtKB-SubCell"/>
</dbReference>
<dbReference type="GO" id="GO:0042953">
    <property type="term" value="P:lipoprotein transport"/>
    <property type="evidence" value="ECO:0007669"/>
    <property type="project" value="InterPro"/>
</dbReference>
<dbReference type="CDD" id="cd16325">
    <property type="entry name" value="LolA"/>
    <property type="match status" value="1"/>
</dbReference>
<dbReference type="FunFam" id="2.50.20.10:FF:000013">
    <property type="entry name" value="Outer-membrane lipoprotein carrier protein"/>
    <property type="match status" value="1"/>
</dbReference>
<dbReference type="Gene3D" id="2.50.20.10">
    <property type="entry name" value="Lipoprotein localisation LolA/LolB/LppX"/>
    <property type="match status" value="1"/>
</dbReference>
<dbReference type="HAMAP" id="MF_00240">
    <property type="entry name" value="LolA"/>
    <property type="match status" value="1"/>
</dbReference>
<dbReference type="InterPro" id="IPR029046">
    <property type="entry name" value="LolA/LolB/LppX"/>
</dbReference>
<dbReference type="InterPro" id="IPR004564">
    <property type="entry name" value="OM_lipoprot_carrier_LolA-like"/>
</dbReference>
<dbReference type="InterPro" id="IPR018323">
    <property type="entry name" value="OM_lipoprot_carrier_LolA_Pbac"/>
</dbReference>
<dbReference type="NCBIfam" id="NF000663">
    <property type="entry name" value="PRK00031.2-1"/>
    <property type="match status" value="1"/>
</dbReference>
<dbReference type="PANTHER" id="PTHR35869">
    <property type="entry name" value="OUTER-MEMBRANE LIPOPROTEIN CARRIER PROTEIN"/>
    <property type="match status" value="1"/>
</dbReference>
<dbReference type="PANTHER" id="PTHR35869:SF1">
    <property type="entry name" value="OUTER-MEMBRANE LIPOPROTEIN CARRIER PROTEIN"/>
    <property type="match status" value="1"/>
</dbReference>
<dbReference type="Pfam" id="PF03548">
    <property type="entry name" value="LolA"/>
    <property type="match status" value="1"/>
</dbReference>
<dbReference type="SUPFAM" id="SSF89392">
    <property type="entry name" value="Prokaryotic lipoproteins and lipoprotein localization factors"/>
    <property type="match status" value="1"/>
</dbReference>
<evidence type="ECO:0000250" key="1"/>
<evidence type="ECO:0000255" key="2"/>
<evidence type="ECO:0000305" key="3"/>
<keyword id="KW-0143">Chaperone</keyword>
<keyword id="KW-0574">Periplasm</keyword>
<keyword id="KW-0653">Protein transport</keyword>
<keyword id="KW-1185">Reference proteome</keyword>
<keyword id="KW-0732">Signal</keyword>
<keyword id="KW-0813">Transport</keyword>
<feature type="signal peptide" evidence="2">
    <location>
        <begin position="1"/>
        <end position="19"/>
    </location>
</feature>
<feature type="chain" id="PRO_0000018262" description="Outer-membrane lipoprotein carrier protein">
    <location>
        <begin position="20"/>
        <end position="184"/>
    </location>
</feature>
<reference key="1">
    <citation type="journal article" date="1997" name="Nature">
        <title>The complete genome sequence of the gastric pathogen Helicobacter pylori.</title>
        <authorList>
            <person name="Tomb J.-F."/>
            <person name="White O."/>
            <person name="Kerlavage A.R."/>
            <person name="Clayton R.A."/>
            <person name="Sutton G.G."/>
            <person name="Fleischmann R.D."/>
            <person name="Ketchum K.A."/>
            <person name="Klenk H.-P."/>
            <person name="Gill S.R."/>
            <person name="Dougherty B.A."/>
            <person name="Nelson K.E."/>
            <person name="Quackenbush J."/>
            <person name="Zhou L."/>
            <person name="Kirkness E.F."/>
            <person name="Peterson S.N."/>
            <person name="Loftus B.J."/>
            <person name="Richardson D.L."/>
            <person name="Dodson R.J."/>
            <person name="Khalak H.G."/>
            <person name="Glodek A."/>
            <person name="McKenney K."/>
            <person name="FitzGerald L.M."/>
            <person name="Lee N."/>
            <person name="Adams M.D."/>
            <person name="Hickey E.K."/>
            <person name="Berg D.E."/>
            <person name="Gocayne J.D."/>
            <person name="Utterback T.R."/>
            <person name="Peterson J.D."/>
            <person name="Kelley J.M."/>
            <person name="Cotton M.D."/>
            <person name="Weidman J.F."/>
            <person name="Fujii C."/>
            <person name="Bowman C."/>
            <person name="Watthey L."/>
            <person name="Wallin E."/>
            <person name="Hayes W.S."/>
            <person name="Borodovsky M."/>
            <person name="Karp P.D."/>
            <person name="Smith H.O."/>
            <person name="Fraser C.M."/>
            <person name="Venter J.C."/>
        </authorList>
    </citation>
    <scope>NUCLEOTIDE SEQUENCE [LARGE SCALE GENOMIC DNA]</scope>
    <source>
        <strain>ATCC 700392 / 26695</strain>
    </source>
</reference>